<comment type="function">
    <text evidence="1">Hydrolyzes ribosome-free peptidyl-tRNAs (with 1 or more amino acids incorporated), which drop off the ribosome during protein synthesis, or as a result of ribosome stalling.</text>
</comment>
<comment type="function">
    <text evidence="1">Catalyzes the release of premature peptidyl moieties from peptidyl-tRNA molecules trapped in stalled 50S ribosomal subunits, and thus maintains levels of free tRNAs and 50S ribosomes.</text>
</comment>
<comment type="catalytic activity">
    <reaction evidence="1">
        <text>an N-acyl-L-alpha-aminoacyl-tRNA + H2O = an N-acyl-L-amino acid + a tRNA + H(+)</text>
        <dbReference type="Rhea" id="RHEA:54448"/>
        <dbReference type="Rhea" id="RHEA-COMP:10123"/>
        <dbReference type="Rhea" id="RHEA-COMP:13883"/>
        <dbReference type="ChEBI" id="CHEBI:15377"/>
        <dbReference type="ChEBI" id="CHEBI:15378"/>
        <dbReference type="ChEBI" id="CHEBI:59874"/>
        <dbReference type="ChEBI" id="CHEBI:78442"/>
        <dbReference type="ChEBI" id="CHEBI:138191"/>
        <dbReference type="EC" id="3.1.1.29"/>
    </reaction>
</comment>
<comment type="subunit">
    <text evidence="1">Monomer.</text>
</comment>
<comment type="subcellular location">
    <subcellularLocation>
        <location evidence="1">Cytoplasm</location>
    </subcellularLocation>
</comment>
<comment type="similarity">
    <text evidence="1">Belongs to the PTH family.</text>
</comment>
<sequence length="204" mass="22373">MSSGNFQLLAGLGNPGSKYTSTRHNVGFMALERLAKKESVQFAMNKKIFGHIANIEIGANKRKLLMPNTYMNESGRSISAAIKWFDLEINQILIFVDDMDLPLGKLRFREGGGSGGHNGLKDIIKHLGSQDFCRLRIGIGPPSINQGDRKQKTIPHVLGKFDQAESKVITKVLDKVIKGLEVIEQYGLVKGTSFLNSSLTATDG</sequence>
<dbReference type="EC" id="3.1.1.29" evidence="1"/>
<dbReference type="EMBL" id="AE017126">
    <property type="protein sequence ID" value="AAP99327.1"/>
    <property type="molecule type" value="Genomic_DNA"/>
</dbReference>
<dbReference type="RefSeq" id="NP_874675.1">
    <property type="nucleotide sequence ID" value="NC_005042.1"/>
</dbReference>
<dbReference type="RefSeq" id="WP_011124436.1">
    <property type="nucleotide sequence ID" value="NC_005042.1"/>
</dbReference>
<dbReference type="SMR" id="Q7VDT7"/>
<dbReference type="STRING" id="167539.Pro_0281"/>
<dbReference type="EnsemblBacteria" id="AAP99327">
    <property type="protein sequence ID" value="AAP99327"/>
    <property type="gene ID" value="Pro_0281"/>
</dbReference>
<dbReference type="KEGG" id="pma:Pro_0281"/>
<dbReference type="PATRIC" id="fig|167539.5.peg.288"/>
<dbReference type="eggNOG" id="COG0193">
    <property type="taxonomic scope" value="Bacteria"/>
</dbReference>
<dbReference type="HOGENOM" id="CLU_062456_3_1_3"/>
<dbReference type="OrthoDB" id="9800507at2"/>
<dbReference type="Proteomes" id="UP000001420">
    <property type="component" value="Chromosome"/>
</dbReference>
<dbReference type="GO" id="GO:0005737">
    <property type="term" value="C:cytoplasm"/>
    <property type="evidence" value="ECO:0007669"/>
    <property type="project" value="UniProtKB-SubCell"/>
</dbReference>
<dbReference type="GO" id="GO:0004045">
    <property type="term" value="F:peptidyl-tRNA hydrolase activity"/>
    <property type="evidence" value="ECO:0007669"/>
    <property type="project" value="UniProtKB-UniRule"/>
</dbReference>
<dbReference type="GO" id="GO:0000049">
    <property type="term" value="F:tRNA binding"/>
    <property type="evidence" value="ECO:0007669"/>
    <property type="project" value="UniProtKB-UniRule"/>
</dbReference>
<dbReference type="GO" id="GO:0006515">
    <property type="term" value="P:protein quality control for misfolded or incompletely synthesized proteins"/>
    <property type="evidence" value="ECO:0007669"/>
    <property type="project" value="UniProtKB-UniRule"/>
</dbReference>
<dbReference type="GO" id="GO:0072344">
    <property type="term" value="P:rescue of stalled ribosome"/>
    <property type="evidence" value="ECO:0007669"/>
    <property type="project" value="UniProtKB-UniRule"/>
</dbReference>
<dbReference type="CDD" id="cd00462">
    <property type="entry name" value="PTH"/>
    <property type="match status" value="1"/>
</dbReference>
<dbReference type="FunFam" id="3.40.50.1470:FF:000001">
    <property type="entry name" value="Peptidyl-tRNA hydrolase"/>
    <property type="match status" value="1"/>
</dbReference>
<dbReference type="Gene3D" id="3.40.50.1470">
    <property type="entry name" value="Peptidyl-tRNA hydrolase"/>
    <property type="match status" value="1"/>
</dbReference>
<dbReference type="HAMAP" id="MF_00083">
    <property type="entry name" value="Pept_tRNA_hydro_bact"/>
    <property type="match status" value="1"/>
</dbReference>
<dbReference type="InterPro" id="IPR001328">
    <property type="entry name" value="Pept_tRNA_hydro"/>
</dbReference>
<dbReference type="InterPro" id="IPR018171">
    <property type="entry name" value="Pept_tRNA_hydro_CS"/>
</dbReference>
<dbReference type="InterPro" id="IPR036416">
    <property type="entry name" value="Pept_tRNA_hydro_sf"/>
</dbReference>
<dbReference type="NCBIfam" id="TIGR00447">
    <property type="entry name" value="pth"/>
    <property type="match status" value="1"/>
</dbReference>
<dbReference type="PANTHER" id="PTHR17224">
    <property type="entry name" value="PEPTIDYL-TRNA HYDROLASE"/>
    <property type="match status" value="1"/>
</dbReference>
<dbReference type="PANTHER" id="PTHR17224:SF1">
    <property type="entry name" value="PEPTIDYL-TRNA HYDROLASE"/>
    <property type="match status" value="1"/>
</dbReference>
<dbReference type="Pfam" id="PF01195">
    <property type="entry name" value="Pept_tRNA_hydro"/>
    <property type="match status" value="1"/>
</dbReference>
<dbReference type="SUPFAM" id="SSF53178">
    <property type="entry name" value="Peptidyl-tRNA hydrolase-like"/>
    <property type="match status" value="1"/>
</dbReference>
<dbReference type="PROSITE" id="PS01195">
    <property type="entry name" value="PEPT_TRNA_HYDROL_1"/>
    <property type="match status" value="1"/>
</dbReference>
<dbReference type="PROSITE" id="PS01196">
    <property type="entry name" value="PEPT_TRNA_HYDROL_2"/>
    <property type="match status" value="1"/>
</dbReference>
<gene>
    <name evidence="1" type="primary">pth</name>
    <name type="ordered locus">Pro_0281</name>
</gene>
<name>PTH_PROMA</name>
<keyword id="KW-0963">Cytoplasm</keyword>
<keyword id="KW-0378">Hydrolase</keyword>
<keyword id="KW-1185">Reference proteome</keyword>
<keyword id="KW-0694">RNA-binding</keyword>
<keyword id="KW-0820">tRNA-binding</keyword>
<proteinExistence type="inferred from homology"/>
<organism>
    <name type="scientific">Prochlorococcus marinus (strain SARG / CCMP1375 / SS120)</name>
    <dbReference type="NCBI Taxonomy" id="167539"/>
    <lineage>
        <taxon>Bacteria</taxon>
        <taxon>Bacillati</taxon>
        <taxon>Cyanobacteriota</taxon>
        <taxon>Cyanophyceae</taxon>
        <taxon>Synechococcales</taxon>
        <taxon>Prochlorococcaceae</taxon>
        <taxon>Prochlorococcus</taxon>
    </lineage>
</organism>
<reference key="1">
    <citation type="journal article" date="2003" name="Proc. Natl. Acad. Sci. U.S.A.">
        <title>Genome sequence of the cyanobacterium Prochlorococcus marinus SS120, a nearly minimal oxyphototrophic genome.</title>
        <authorList>
            <person name="Dufresne A."/>
            <person name="Salanoubat M."/>
            <person name="Partensky F."/>
            <person name="Artiguenave F."/>
            <person name="Axmann I.M."/>
            <person name="Barbe V."/>
            <person name="Duprat S."/>
            <person name="Galperin M.Y."/>
            <person name="Koonin E.V."/>
            <person name="Le Gall F."/>
            <person name="Makarova K.S."/>
            <person name="Ostrowski M."/>
            <person name="Oztas S."/>
            <person name="Robert C."/>
            <person name="Rogozin I.B."/>
            <person name="Scanlan D.J."/>
            <person name="Tandeau de Marsac N."/>
            <person name="Weissenbach J."/>
            <person name="Wincker P."/>
            <person name="Wolf Y.I."/>
            <person name="Hess W.R."/>
        </authorList>
    </citation>
    <scope>NUCLEOTIDE SEQUENCE [LARGE SCALE GENOMIC DNA]</scope>
    <source>
        <strain>SARG / CCMP1375 / SS120</strain>
    </source>
</reference>
<feature type="chain" id="PRO_0000187793" description="Peptidyl-tRNA hydrolase">
    <location>
        <begin position="1"/>
        <end position="204"/>
    </location>
</feature>
<feature type="active site" description="Proton acceptor" evidence="1">
    <location>
        <position position="24"/>
    </location>
</feature>
<feature type="binding site" evidence="1">
    <location>
        <position position="19"/>
    </location>
    <ligand>
        <name>tRNA</name>
        <dbReference type="ChEBI" id="CHEBI:17843"/>
    </ligand>
</feature>
<feature type="binding site" evidence="1">
    <location>
        <position position="70"/>
    </location>
    <ligand>
        <name>tRNA</name>
        <dbReference type="ChEBI" id="CHEBI:17843"/>
    </ligand>
</feature>
<feature type="binding site" evidence="1">
    <location>
        <position position="72"/>
    </location>
    <ligand>
        <name>tRNA</name>
        <dbReference type="ChEBI" id="CHEBI:17843"/>
    </ligand>
</feature>
<feature type="binding site" evidence="1">
    <location>
        <position position="118"/>
    </location>
    <ligand>
        <name>tRNA</name>
        <dbReference type="ChEBI" id="CHEBI:17843"/>
    </ligand>
</feature>
<feature type="site" description="Discriminates between blocked and unblocked aminoacyl-tRNA" evidence="1">
    <location>
        <position position="14"/>
    </location>
</feature>
<feature type="site" description="Stabilizes the basic form of H active site to accept a proton" evidence="1">
    <location>
        <position position="97"/>
    </location>
</feature>
<protein>
    <recommendedName>
        <fullName evidence="1">Peptidyl-tRNA hydrolase</fullName>
        <shortName evidence="1">Pth</shortName>
        <ecNumber evidence="1">3.1.1.29</ecNumber>
    </recommendedName>
</protein>
<accession>Q7VDT7</accession>
<evidence type="ECO:0000255" key="1">
    <source>
        <dbReference type="HAMAP-Rule" id="MF_00083"/>
    </source>
</evidence>